<comment type="catalytic activity">
    <reaction evidence="1">
        <text>Hydrolysis of terminal, non-reducing beta-D-glucosyl residues with release of beta-D-glucose.</text>
        <dbReference type="EC" id="3.2.1.21"/>
    </reaction>
</comment>
<comment type="alternative products">
    <event type="alternative splicing"/>
    <isoform>
        <id>O48779-1</id>
        <name>1</name>
        <sequence type="displayed"/>
    </isoform>
    <isoform>
        <id>O48779-2</id>
        <name>2</name>
        <sequence type="described" ref="VSP_038464 VSP_038465"/>
    </isoform>
</comment>
<comment type="similarity">
    <text evidence="9">Belongs to the glycosyl hydrolase 1 family.</text>
</comment>
<comment type="sequence caution" evidence="9">
    <conflict type="frameshift">
        <sequence resource="EMBL-CDS" id="AAN60253"/>
    </conflict>
</comment>
<comment type="sequence caution" evidence="9">
    <molecule>Isoform 2</molecule>
    <conflict type="frameshift">
        <sequence resource="EMBL-CDS" id="AAN60253"/>
    </conflict>
</comment>
<gene>
    <name evidence="7" type="primary">BGLU33</name>
    <name evidence="10" type="ordered locus">At2g32860</name>
    <name evidence="11" type="ORF">T21L14.20</name>
</gene>
<organism>
    <name type="scientific">Arabidopsis thaliana</name>
    <name type="common">Mouse-ear cress</name>
    <dbReference type="NCBI Taxonomy" id="3702"/>
    <lineage>
        <taxon>Eukaryota</taxon>
        <taxon>Viridiplantae</taxon>
        <taxon>Streptophyta</taxon>
        <taxon>Embryophyta</taxon>
        <taxon>Tracheophyta</taxon>
        <taxon>Spermatophyta</taxon>
        <taxon>Magnoliopsida</taxon>
        <taxon>eudicotyledons</taxon>
        <taxon>Gunneridae</taxon>
        <taxon>Pentapetalae</taxon>
        <taxon>rosids</taxon>
        <taxon>malvids</taxon>
        <taxon>Brassicales</taxon>
        <taxon>Brassicaceae</taxon>
        <taxon>Camelineae</taxon>
        <taxon>Arabidopsis</taxon>
    </lineage>
</organism>
<sequence>MATATLTLFLGLLALTSTILSFNADARPQPSDEDLGTIIGPHQTSFDDEIGIVIGPHATVDDEDIDMDMGTTVGPQTNLNDDDLGTIIGPEFEIHKQDFPADFIFGTSVSAYQVEGAKKGSGRGLTSWDEFTHMFPEKVQQNGDGDEGVDFYTRYKDDIKLMKELNTNGFRFSISWTRILPYGTIKKGVNEEGVKFYNDLINELLANGIQPSVTLFHWESPLALEMEYGGFLNERIVEDFREFANFCFKEFGDRVKNWATFNEPSVYSVAGYSKGKKAPGRCSKWQAPKCPTGDSSEEPYIVAHNQILAHLAAVDEFRNCKKVEGGGKIGIVLVSHWFEPKDPNSSEDVKAARRSLEYQLGWFLRPLTYGQYPAEMLEDVNIRLREFTPEESEKLRKSLDFVGLNYYGAFFSTPLAKVNSSQLNYETDLRVNWTVITNNLSLPDLQTTSMGIVIYPAGLKNILKHIKDEYMDPEIYIMENGMDEIDYGTKNITEATNDYGRKEFIKSHILIMGKSIRMDKVRLKGYYIWSLMDNFEWDKGYKVRFGLYYVDYNDNMKRYIRSSGKWLSEFLDSKETLHKCYFEGHREKGYAPKLFDVEYLEPENSQLSYRSDFM</sequence>
<protein>
    <recommendedName>
        <fullName evidence="7">Beta-glucosidase 33</fullName>
        <shortName evidence="7">AtBGLU33</shortName>
        <ecNumber evidence="1">3.2.1.21</ecNumber>
    </recommendedName>
</protein>
<reference key="1">
    <citation type="journal article" date="1999" name="Nature">
        <title>Sequence and analysis of chromosome 2 of the plant Arabidopsis thaliana.</title>
        <authorList>
            <person name="Lin X."/>
            <person name="Kaul S."/>
            <person name="Rounsley S.D."/>
            <person name="Shea T.P."/>
            <person name="Benito M.-I."/>
            <person name="Town C.D."/>
            <person name="Fujii C.Y."/>
            <person name="Mason T.M."/>
            <person name="Bowman C.L."/>
            <person name="Barnstead M.E."/>
            <person name="Feldblyum T.V."/>
            <person name="Buell C.R."/>
            <person name="Ketchum K.A."/>
            <person name="Lee J.J."/>
            <person name="Ronning C.M."/>
            <person name="Koo H.L."/>
            <person name="Moffat K.S."/>
            <person name="Cronin L.A."/>
            <person name="Shen M."/>
            <person name="Pai G."/>
            <person name="Van Aken S."/>
            <person name="Umayam L."/>
            <person name="Tallon L.J."/>
            <person name="Gill J.E."/>
            <person name="Adams M.D."/>
            <person name="Carrera A.J."/>
            <person name="Creasy T.H."/>
            <person name="Goodman H.M."/>
            <person name="Somerville C.R."/>
            <person name="Copenhaver G.P."/>
            <person name="Preuss D."/>
            <person name="Nierman W.C."/>
            <person name="White O."/>
            <person name="Eisen J.A."/>
            <person name="Salzberg S.L."/>
            <person name="Fraser C.M."/>
            <person name="Venter J.C."/>
        </authorList>
    </citation>
    <scope>NUCLEOTIDE SEQUENCE [LARGE SCALE GENOMIC DNA]</scope>
    <source>
        <strain>cv. Columbia</strain>
    </source>
</reference>
<reference key="2">
    <citation type="journal article" date="2017" name="Plant J.">
        <title>Araport11: a complete reannotation of the Arabidopsis thaliana reference genome.</title>
        <authorList>
            <person name="Cheng C.Y."/>
            <person name="Krishnakumar V."/>
            <person name="Chan A.P."/>
            <person name="Thibaud-Nissen F."/>
            <person name="Schobel S."/>
            <person name="Town C.D."/>
        </authorList>
    </citation>
    <scope>GENOME REANNOTATION</scope>
    <source>
        <strain>cv. Columbia</strain>
    </source>
</reference>
<reference key="3">
    <citation type="submission" date="1998-08" db="EMBL/GenBank/DDBJ databases">
        <title>Signal peptide selection derived cDNAs from Arabidopsis thaliana leaves and guard cells.</title>
        <authorList>
            <person name="Stracke R."/>
            <person name="Palme K."/>
        </authorList>
    </citation>
    <scope>NUCLEOTIDE SEQUENCE [MRNA] OF 134-614 (ISOFORM 2)</scope>
</reference>
<reference key="4">
    <citation type="journal article" date="2004" name="Plant Mol. Biol.">
        <title>Functional genomic analysis of Arabidopsis thaliana glycoside hydrolase family 1.</title>
        <authorList>
            <person name="Xu Z."/>
            <person name="Escamilla-Trevino L.L."/>
            <person name="Zeng L."/>
            <person name="Lalgondar M."/>
            <person name="Bevan D.R."/>
            <person name="Winkel B.S.J."/>
            <person name="Mohamed A."/>
            <person name="Cheng C.-L."/>
            <person name="Shih M.-C."/>
            <person name="Poulton J.E."/>
            <person name="Esen A."/>
        </authorList>
    </citation>
    <scope>GENE FAMILY</scope>
    <scope>NOMENCLATURE</scope>
</reference>
<feature type="signal peptide" evidence="5">
    <location>
        <begin position="1"/>
        <end position="26"/>
    </location>
</feature>
<feature type="chain" id="PRO_0000389595" description="Beta-glucosidase 33">
    <location>
        <begin position="27"/>
        <end position="614"/>
    </location>
</feature>
<feature type="active site" description="Proton donor" evidence="3">
    <location>
        <position position="263"/>
    </location>
</feature>
<feature type="active site" description="Nucleophile" evidence="3">
    <location>
        <position position="479"/>
    </location>
</feature>
<feature type="binding site" evidence="3">
    <location>
        <position position="113"/>
    </location>
    <ligand>
        <name>a beta-D-glucoside</name>
        <dbReference type="ChEBI" id="CHEBI:22798"/>
    </ligand>
</feature>
<feature type="binding site" evidence="3">
    <location>
        <position position="217"/>
    </location>
    <ligand>
        <name>a beta-D-glucoside</name>
        <dbReference type="ChEBI" id="CHEBI:22798"/>
    </ligand>
</feature>
<feature type="binding site" evidence="3">
    <location>
        <begin position="262"/>
        <end position="263"/>
    </location>
    <ligand>
        <name>a beta-D-glucoside</name>
        <dbReference type="ChEBI" id="CHEBI:22798"/>
    </ligand>
</feature>
<feature type="binding site" evidence="3">
    <location>
        <position position="407"/>
    </location>
    <ligand>
        <name>a beta-D-glucoside</name>
        <dbReference type="ChEBI" id="CHEBI:22798"/>
    </ligand>
</feature>
<feature type="binding site" evidence="4">
    <location>
        <position position="479"/>
    </location>
    <ligand>
        <name>a beta-D-glucoside</name>
        <dbReference type="ChEBI" id="CHEBI:22798"/>
    </ligand>
</feature>
<feature type="binding site" evidence="3">
    <location>
        <position position="529"/>
    </location>
    <ligand>
        <name>a beta-D-glucoside</name>
        <dbReference type="ChEBI" id="CHEBI:22798"/>
    </ligand>
</feature>
<feature type="binding site" evidence="3">
    <location>
        <begin position="536"/>
        <end position="537"/>
    </location>
    <ligand>
        <name>a beta-D-glucoside</name>
        <dbReference type="ChEBI" id="CHEBI:22798"/>
    </ligand>
</feature>
<feature type="binding site" evidence="2">
    <location>
        <position position="545"/>
    </location>
    <ligand>
        <name>a beta-D-glucoside</name>
        <dbReference type="ChEBI" id="CHEBI:22798"/>
    </ligand>
</feature>
<feature type="glycosylation site" description="N-linked (GlcNAc...) asparagine" evidence="6">
    <location>
        <position position="344"/>
    </location>
</feature>
<feature type="glycosylation site" description="N-linked (GlcNAc...) asparagine" evidence="6">
    <location>
        <position position="419"/>
    </location>
</feature>
<feature type="glycosylation site" description="N-linked (GlcNAc...) asparagine" evidence="6">
    <location>
        <position position="432"/>
    </location>
</feature>
<feature type="glycosylation site" description="N-linked (GlcNAc...) asparagine" evidence="6">
    <location>
        <position position="439"/>
    </location>
</feature>
<feature type="glycosylation site" description="N-linked (GlcNAc...) asparagine" evidence="6">
    <location>
        <position position="491"/>
    </location>
</feature>
<feature type="disulfide bond" evidence="3">
    <location>
        <begin position="282"/>
        <end position="290"/>
    </location>
</feature>
<feature type="splice variant" id="VSP_038464" description="In isoform 2." evidence="8">
    <original>VE</original>
    <variation>CQE</variation>
    <location>
        <begin position="323"/>
        <end position="324"/>
    </location>
</feature>
<feature type="splice variant" id="VSP_038465" description="In isoform 2." evidence="8">
    <original>VITNNLSLPDLQ</original>
    <variation>DSQNNSPHLK</variation>
    <location>
        <begin position="435"/>
        <end position="446"/>
    </location>
</feature>
<feature type="sequence conflict" description="In Ref. 3; AAN60253." evidence="9" ref="3">
    <original>P</original>
    <variation>S</variation>
    <location>
        <position position="291"/>
    </location>
</feature>
<dbReference type="EC" id="3.2.1.21" evidence="1"/>
<dbReference type="EMBL" id="AC003033">
    <property type="protein sequence ID" value="AAB91979.1"/>
    <property type="molecule type" value="Genomic_DNA"/>
</dbReference>
<dbReference type="EMBL" id="CP002685">
    <property type="protein sequence ID" value="AEC08753.1"/>
    <property type="molecule type" value="Genomic_DNA"/>
</dbReference>
<dbReference type="EMBL" id="CP002685">
    <property type="protein sequence ID" value="AEC08754.1"/>
    <property type="molecule type" value="Genomic_DNA"/>
</dbReference>
<dbReference type="EMBL" id="AF083694">
    <property type="protein sequence ID" value="AAN60253.1"/>
    <property type="status" value="ALT_FRAME"/>
    <property type="molecule type" value="mRNA"/>
</dbReference>
<dbReference type="PIR" id="T01121">
    <property type="entry name" value="T01121"/>
</dbReference>
<dbReference type="RefSeq" id="NP_180845.2">
    <molecule id="O48779-2"/>
    <property type="nucleotide sequence ID" value="NM_128846.4"/>
</dbReference>
<dbReference type="RefSeq" id="NP_973587.1">
    <molecule id="O48779-1"/>
    <property type="nucleotide sequence ID" value="NM_201858.1"/>
</dbReference>
<dbReference type="SMR" id="O48779"/>
<dbReference type="FunCoup" id="O48779">
    <property type="interactions" value="198"/>
</dbReference>
<dbReference type="STRING" id="3702.O48779"/>
<dbReference type="CAZy" id="GH1">
    <property type="family name" value="Glycoside Hydrolase Family 1"/>
</dbReference>
<dbReference type="GlyCosmos" id="O48779">
    <property type="glycosylation" value="5 sites, No reported glycans"/>
</dbReference>
<dbReference type="GlyGen" id="O48779">
    <property type="glycosylation" value="5 sites"/>
</dbReference>
<dbReference type="PaxDb" id="3702-AT2G32860.2"/>
<dbReference type="ProteomicsDB" id="240334">
    <molecule id="O48779-1"/>
</dbReference>
<dbReference type="EnsemblPlants" id="AT2G32860.1">
    <molecule id="O48779-2"/>
    <property type="protein sequence ID" value="AT2G32860.1"/>
    <property type="gene ID" value="AT2G32860"/>
</dbReference>
<dbReference type="EnsemblPlants" id="AT2G32860.2">
    <molecule id="O48779-1"/>
    <property type="protein sequence ID" value="AT2G32860.2"/>
    <property type="gene ID" value="AT2G32860"/>
</dbReference>
<dbReference type="GeneID" id="817847"/>
<dbReference type="Gramene" id="AT2G32860.1">
    <molecule id="O48779-2"/>
    <property type="protein sequence ID" value="AT2G32860.1"/>
    <property type="gene ID" value="AT2G32860"/>
</dbReference>
<dbReference type="Gramene" id="AT2G32860.2">
    <molecule id="O48779-1"/>
    <property type="protein sequence ID" value="AT2G32860.2"/>
    <property type="gene ID" value="AT2G32860"/>
</dbReference>
<dbReference type="KEGG" id="ath:AT2G32860"/>
<dbReference type="Araport" id="AT2G32860"/>
<dbReference type="TAIR" id="AT2G32860">
    <property type="gene designation" value="BGLU33"/>
</dbReference>
<dbReference type="eggNOG" id="KOG0626">
    <property type="taxonomic scope" value="Eukaryota"/>
</dbReference>
<dbReference type="InParanoid" id="O48779"/>
<dbReference type="OMA" id="HNTFEDD"/>
<dbReference type="PhylomeDB" id="O48779"/>
<dbReference type="BioCyc" id="ARA:AT2G32860-MONOMER"/>
<dbReference type="BioCyc" id="MetaCyc:MONOMER-19205"/>
<dbReference type="PRO" id="PR:O48779"/>
<dbReference type="Proteomes" id="UP000006548">
    <property type="component" value="Chromosome 2"/>
</dbReference>
<dbReference type="ExpressionAtlas" id="O48779">
    <property type="expression patterns" value="baseline and differential"/>
</dbReference>
<dbReference type="GO" id="GO:0008422">
    <property type="term" value="F:beta-glucosidase activity"/>
    <property type="evidence" value="ECO:0007669"/>
    <property type="project" value="UniProtKB-EC"/>
</dbReference>
<dbReference type="GO" id="GO:0005975">
    <property type="term" value="P:carbohydrate metabolic process"/>
    <property type="evidence" value="ECO:0007669"/>
    <property type="project" value="InterPro"/>
</dbReference>
<dbReference type="FunFam" id="3.20.20.80:FF:000246">
    <property type="entry name" value="Predicted protein"/>
    <property type="match status" value="1"/>
</dbReference>
<dbReference type="Gene3D" id="3.20.20.80">
    <property type="entry name" value="Glycosidases"/>
    <property type="match status" value="1"/>
</dbReference>
<dbReference type="InterPro" id="IPR001360">
    <property type="entry name" value="Glyco_hydro_1"/>
</dbReference>
<dbReference type="InterPro" id="IPR033132">
    <property type="entry name" value="Glyco_hydro_1_N_CS"/>
</dbReference>
<dbReference type="InterPro" id="IPR017853">
    <property type="entry name" value="Glycoside_hydrolase_SF"/>
</dbReference>
<dbReference type="PANTHER" id="PTHR10353:SF320">
    <property type="entry name" value="BETA-GLUCOSIDASE 33"/>
    <property type="match status" value="1"/>
</dbReference>
<dbReference type="PANTHER" id="PTHR10353">
    <property type="entry name" value="GLYCOSYL HYDROLASE"/>
    <property type="match status" value="1"/>
</dbReference>
<dbReference type="Pfam" id="PF00232">
    <property type="entry name" value="Glyco_hydro_1"/>
    <property type="match status" value="1"/>
</dbReference>
<dbReference type="PRINTS" id="PR00131">
    <property type="entry name" value="GLHYDRLASE1"/>
</dbReference>
<dbReference type="SUPFAM" id="SSF51445">
    <property type="entry name" value="(Trans)glycosidases"/>
    <property type="match status" value="1"/>
</dbReference>
<dbReference type="PROSITE" id="PS00653">
    <property type="entry name" value="GLYCOSYL_HYDROL_F1_2"/>
    <property type="match status" value="1"/>
</dbReference>
<keyword id="KW-0025">Alternative splicing</keyword>
<keyword id="KW-1015">Disulfide bond</keyword>
<keyword id="KW-0325">Glycoprotein</keyword>
<keyword id="KW-0326">Glycosidase</keyword>
<keyword id="KW-0378">Hydrolase</keyword>
<keyword id="KW-1185">Reference proteome</keyword>
<keyword id="KW-0732">Signal</keyword>
<evidence type="ECO:0000250" key="1">
    <source>
        <dbReference type="UniProtKB" id="O64879"/>
    </source>
</evidence>
<evidence type="ECO:0000250" key="2">
    <source>
        <dbReference type="UniProtKB" id="Q1XH05"/>
    </source>
</evidence>
<evidence type="ECO:0000250" key="3">
    <source>
        <dbReference type="UniProtKB" id="Q7XSK0"/>
    </source>
</evidence>
<evidence type="ECO:0000250" key="4">
    <source>
        <dbReference type="UniProtKB" id="Q9SPP9"/>
    </source>
</evidence>
<evidence type="ECO:0000255" key="5"/>
<evidence type="ECO:0000255" key="6">
    <source>
        <dbReference type="PROSITE-ProRule" id="PRU00498"/>
    </source>
</evidence>
<evidence type="ECO:0000303" key="7">
    <source>
    </source>
</evidence>
<evidence type="ECO:0000303" key="8">
    <source ref="3"/>
</evidence>
<evidence type="ECO:0000305" key="9"/>
<evidence type="ECO:0000312" key="10">
    <source>
        <dbReference type="Araport" id="AT2G32860"/>
    </source>
</evidence>
<evidence type="ECO:0000312" key="11">
    <source>
        <dbReference type="EMBL" id="AAB91979.1"/>
    </source>
</evidence>
<proteinExistence type="evidence at transcript level"/>
<name>BGL33_ARATH</name>
<accession>O48779</accession>
<accession>Q8H7F9</accession>